<feature type="chain" id="PRO_1000139363" description="CTP synthase">
    <location>
        <begin position="1"/>
        <end position="545"/>
    </location>
</feature>
<feature type="domain" description="Glutamine amidotransferase type-1" evidence="1">
    <location>
        <begin position="290"/>
        <end position="541"/>
    </location>
</feature>
<feature type="region of interest" description="Amidoligase domain" evidence="1">
    <location>
        <begin position="1"/>
        <end position="265"/>
    </location>
</feature>
<feature type="active site" description="Nucleophile; for glutamine hydrolysis" evidence="1">
    <location>
        <position position="378"/>
    </location>
</feature>
<feature type="active site" evidence="1">
    <location>
        <position position="514"/>
    </location>
</feature>
<feature type="active site" evidence="1">
    <location>
        <position position="516"/>
    </location>
</feature>
<feature type="binding site" evidence="1">
    <location>
        <position position="13"/>
    </location>
    <ligand>
        <name>CTP</name>
        <dbReference type="ChEBI" id="CHEBI:37563"/>
        <note>allosteric inhibitor</note>
    </ligand>
</feature>
<feature type="binding site" evidence="1">
    <location>
        <position position="13"/>
    </location>
    <ligand>
        <name>UTP</name>
        <dbReference type="ChEBI" id="CHEBI:46398"/>
    </ligand>
</feature>
<feature type="binding site" evidence="1">
    <location>
        <begin position="14"/>
        <end position="19"/>
    </location>
    <ligand>
        <name>ATP</name>
        <dbReference type="ChEBI" id="CHEBI:30616"/>
    </ligand>
</feature>
<feature type="binding site" evidence="1">
    <location>
        <position position="71"/>
    </location>
    <ligand>
        <name>ATP</name>
        <dbReference type="ChEBI" id="CHEBI:30616"/>
    </ligand>
</feature>
<feature type="binding site" evidence="1">
    <location>
        <position position="71"/>
    </location>
    <ligand>
        <name>Mg(2+)</name>
        <dbReference type="ChEBI" id="CHEBI:18420"/>
    </ligand>
</feature>
<feature type="binding site" evidence="1">
    <location>
        <position position="139"/>
    </location>
    <ligand>
        <name>Mg(2+)</name>
        <dbReference type="ChEBI" id="CHEBI:18420"/>
    </ligand>
</feature>
<feature type="binding site" evidence="1">
    <location>
        <begin position="146"/>
        <end position="148"/>
    </location>
    <ligand>
        <name>CTP</name>
        <dbReference type="ChEBI" id="CHEBI:37563"/>
        <note>allosteric inhibitor</note>
    </ligand>
</feature>
<feature type="binding site" evidence="1">
    <location>
        <begin position="186"/>
        <end position="191"/>
    </location>
    <ligand>
        <name>CTP</name>
        <dbReference type="ChEBI" id="CHEBI:37563"/>
        <note>allosteric inhibitor</note>
    </ligand>
</feature>
<feature type="binding site" evidence="1">
    <location>
        <begin position="186"/>
        <end position="191"/>
    </location>
    <ligand>
        <name>UTP</name>
        <dbReference type="ChEBI" id="CHEBI:46398"/>
    </ligand>
</feature>
<feature type="binding site" evidence="1">
    <location>
        <position position="222"/>
    </location>
    <ligand>
        <name>CTP</name>
        <dbReference type="ChEBI" id="CHEBI:37563"/>
        <note>allosteric inhibitor</note>
    </ligand>
</feature>
<feature type="binding site" evidence="1">
    <location>
        <position position="222"/>
    </location>
    <ligand>
        <name>UTP</name>
        <dbReference type="ChEBI" id="CHEBI:46398"/>
    </ligand>
</feature>
<feature type="binding site" evidence="1">
    <location>
        <position position="351"/>
    </location>
    <ligand>
        <name>L-glutamine</name>
        <dbReference type="ChEBI" id="CHEBI:58359"/>
    </ligand>
</feature>
<feature type="binding site" evidence="1">
    <location>
        <begin position="379"/>
        <end position="382"/>
    </location>
    <ligand>
        <name>L-glutamine</name>
        <dbReference type="ChEBI" id="CHEBI:58359"/>
    </ligand>
</feature>
<feature type="binding site" evidence="1">
    <location>
        <position position="402"/>
    </location>
    <ligand>
        <name>L-glutamine</name>
        <dbReference type="ChEBI" id="CHEBI:58359"/>
    </ligand>
</feature>
<feature type="binding site" evidence="1">
    <location>
        <position position="469"/>
    </location>
    <ligand>
        <name>L-glutamine</name>
        <dbReference type="ChEBI" id="CHEBI:58359"/>
    </ligand>
</feature>
<name>PYRG_ACIF2</name>
<proteinExistence type="inferred from homology"/>
<comment type="function">
    <text evidence="1">Catalyzes the ATP-dependent amination of UTP to CTP with either L-glutamine or ammonia as the source of nitrogen. Regulates intracellular CTP levels through interactions with the four ribonucleotide triphosphates.</text>
</comment>
<comment type="catalytic activity">
    <reaction evidence="1">
        <text>UTP + L-glutamine + ATP + H2O = CTP + L-glutamate + ADP + phosphate + 2 H(+)</text>
        <dbReference type="Rhea" id="RHEA:26426"/>
        <dbReference type="ChEBI" id="CHEBI:15377"/>
        <dbReference type="ChEBI" id="CHEBI:15378"/>
        <dbReference type="ChEBI" id="CHEBI:29985"/>
        <dbReference type="ChEBI" id="CHEBI:30616"/>
        <dbReference type="ChEBI" id="CHEBI:37563"/>
        <dbReference type="ChEBI" id="CHEBI:43474"/>
        <dbReference type="ChEBI" id="CHEBI:46398"/>
        <dbReference type="ChEBI" id="CHEBI:58359"/>
        <dbReference type="ChEBI" id="CHEBI:456216"/>
        <dbReference type="EC" id="6.3.4.2"/>
    </reaction>
</comment>
<comment type="catalytic activity">
    <reaction evidence="1">
        <text>L-glutamine + H2O = L-glutamate + NH4(+)</text>
        <dbReference type="Rhea" id="RHEA:15889"/>
        <dbReference type="ChEBI" id="CHEBI:15377"/>
        <dbReference type="ChEBI" id="CHEBI:28938"/>
        <dbReference type="ChEBI" id="CHEBI:29985"/>
        <dbReference type="ChEBI" id="CHEBI:58359"/>
    </reaction>
</comment>
<comment type="catalytic activity">
    <reaction evidence="1">
        <text>UTP + NH4(+) + ATP = CTP + ADP + phosphate + 2 H(+)</text>
        <dbReference type="Rhea" id="RHEA:16597"/>
        <dbReference type="ChEBI" id="CHEBI:15378"/>
        <dbReference type="ChEBI" id="CHEBI:28938"/>
        <dbReference type="ChEBI" id="CHEBI:30616"/>
        <dbReference type="ChEBI" id="CHEBI:37563"/>
        <dbReference type="ChEBI" id="CHEBI:43474"/>
        <dbReference type="ChEBI" id="CHEBI:46398"/>
        <dbReference type="ChEBI" id="CHEBI:456216"/>
    </reaction>
</comment>
<comment type="activity regulation">
    <text evidence="1">Allosterically activated by GTP, when glutamine is the substrate; GTP has no effect on the reaction when ammonia is the substrate. The allosteric effector GTP functions by stabilizing the protein conformation that binds the tetrahedral intermediate(s) formed during glutamine hydrolysis. Inhibited by the product CTP, via allosteric rather than competitive inhibition.</text>
</comment>
<comment type="pathway">
    <text evidence="1">Pyrimidine metabolism; CTP biosynthesis via de novo pathway; CTP from UDP: step 2/2.</text>
</comment>
<comment type="subunit">
    <text evidence="1">Homotetramer.</text>
</comment>
<comment type="miscellaneous">
    <text evidence="1">CTPSs have evolved a hybrid strategy for distinguishing between UTP and CTP. The overlapping regions of the product feedback inhibitory and substrate sites recognize a common feature in both compounds, the triphosphate moiety. To differentiate isosteric substrate and product pyrimidine rings, an additional pocket far from the expected kinase/ligase catalytic site, specifically recognizes the cytosine and ribose portions of the product inhibitor.</text>
</comment>
<comment type="similarity">
    <text evidence="1">Belongs to the CTP synthase family.</text>
</comment>
<evidence type="ECO:0000255" key="1">
    <source>
        <dbReference type="HAMAP-Rule" id="MF_01227"/>
    </source>
</evidence>
<keyword id="KW-0067">ATP-binding</keyword>
<keyword id="KW-0315">Glutamine amidotransferase</keyword>
<keyword id="KW-0436">Ligase</keyword>
<keyword id="KW-0460">Magnesium</keyword>
<keyword id="KW-0479">Metal-binding</keyword>
<keyword id="KW-0547">Nucleotide-binding</keyword>
<keyword id="KW-0665">Pyrimidine biosynthesis</keyword>
<keyword id="KW-1185">Reference proteome</keyword>
<protein>
    <recommendedName>
        <fullName evidence="1">CTP synthase</fullName>
        <ecNumber evidence="1">6.3.4.2</ecNumber>
    </recommendedName>
    <alternativeName>
        <fullName evidence="1">Cytidine 5'-triphosphate synthase</fullName>
    </alternativeName>
    <alternativeName>
        <fullName evidence="1">Cytidine triphosphate synthetase</fullName>
        <shortName evidence="1">CTP synthetase</shortName>
        <shortName evidence="1">CTPS</shortName>
    </alternativeName>
    <alternativeName>
        <fullName evidence="1">UTP--ammonia ligase</fullName>
    </alternativeName>
</protein>
<gene>
    <name evidence="1" type="primary">pyrG</name>
    <name type="ordered locus">AFE_0847</name>
</gene>
<sequence length="545" mass="60074">MSKYIFVTGGVVSSLGKGAAGAALGALLEARGLKVTMLKLDPYINVDPGTMSPFQHGEVFVTADGAETDLDLGHYERFLSTRMGKRNNFTTGLVYQTVIEKERRGDYLGRTVQVIPHVTDEIKRRIRLGAADADVALVEIGGTVGDIESQPFLEAIRQMAVEEERGDTLFMHLTLVPYLASAGEMKTKPTQHSVRELRAIGIQPDVLLCRADRPIPADHRAKIGLFSNLPEKAVISAIDTDSIYRIPLLFHAQGLDDLVVQNLGLHLSAPDLSVWNGIINALEHPEGEVVIALVGKYVGLTESYKSLAEALLHAGLRARRSVRFLYVDAEDVETQGTEILAEADAILVPGGFGGRGTEGKIASIRHARERKVPYLGICLGMQLAVVEFARHRAGLMNANSTELDPQTPAPVITLMTEWSDPEGHKAYREEGGNLGGTMRLGEQECRLEPDSLAIQAYGQERIHERHRHRFEFNNRYREPLAMAGLRYTGFSADSELVEVVELPDHPWFLGCQFHPEFTSNPREGHPLFDAFMRAAIAQRERDGSS</sequence>
<organism>
    <name type="scientific">Acidithiobacillus ferrooxidans (strain ATCC 23270 / DSM 14882 / CIP 104768 / NCIMB 8455)</name>
    <name type="common">Ferrobacillus ferrooxidans (strain ATCC 23270)</name>
    <dbReference type="NCBI Taxonomy" id="243159"/>
    <lineage>
        <taxon>Bacteria</taxon>
        <taxon>Pseudomonadati</taxon>
        <taxon>Pseudomonadota</taxon>
        <taxon>Acidithiobacillia</taxon>
        <taxon>Acidithiobacillales</taxon>
        <taxon>Acidithiobacillaceae</taxon>
        <taxon>Acidithiobacillus</taxon>
    </lineage>
</organism>
<reference key="1">
    <citation type="journal article" date="2008" name="BMC Genomics">
        <title>Acidithiobacillus ferrooxidans metabolism: from genome sequence to industrial applications.</title>
        <authorList>
            <person name="Valdes J."/>
            <person name="Pedroso I."/>
            <person name="Quatrini R."/>
            <person name="Dodson R.J."/>
            <person name="Tettelin H."/>
            <person name="Blake R. II"/>
            <person name="Eisen J.A."/>
            <person name="Holmes D.S."/>
        </authorList>
    </citation>
    <scope>NUCLEOTIDE SEQUENCE [LARGE SCALE GENOMIC DNA]</scope>
    <source>
        <strain>ATCC 23270 / DSM 14882 / CIP 104768 / NCIMB 8455</strain>
    </source>
</reference>
<dbReference type="EC" id="6.3.4.2" evidence="1"/>
<dbReference type="EMBL" id="CP001219">
    <property type="protein sequence ID" value="ACK79035.1"/>
    <property type="molecule type" value="Genomic_DNA"/>
</dbReference>
<dbReference type="RefSeq" id="WP_012536390.1">
    <property type="nucleotide sequence ID" value="NC_011761.1"/>
</dbReference>
<dbReference type="SMR" id="B7J6R2"/>
<dbReference type="STRING" id="243159.AFE_0847"/>
<dbReference type="MEROPS" id="C26.964"/>
<dbReference type="PaxDb" id="243159-AFE_0847"/>
<dbReference type="GeneID" id="65280174"/>
<dbReference type="KEGG" id="afr:AFE_0847"/>
<dbReference type="eggNOG" id="COG0504">
    <property type="taxonomic scope" value="Bacteria"/>
</dbReference>
<dbReference type="HOGENOM" id="CLU_011675_5_0_6"/>
<dbReference type="UniPathway" id="UPA00159">
    <property type="reaction ID" value="UER00277"/>
</dbReference>
<dbReference type="Proteomes" id="UP000001362">
    <property type="component" value="Chromosome"/>
</dbReference>
<dbReference type="GO" id="GO:0005829">
    <property type="term" value="C:cytosol"/>
    <property type="evidence" value="ECO:0007669"/>
    <property type="project" value="TreeGrafter"/>
</dbReference>
<dbReference type="GO" id="GO:0005524">
    <property type="term" value="F:ATP binding"/>
    <property type="evidence" value="ECO:0007669"/>
    <property type="project" value="UniProtKB-KW"/>
</dbReference>
<dbReference type="GO" id="GO:0003883">
    <property type="term" value="F:CTP synthase activity"/>
    <property type="evidence" value="ECO:0007669"/>
    <property type="project" value="UniProtKB-UniRule"/>
</dbReference>
<dbReference type="GO" id="GO:0004359">
    <property type="term" value="F:glutaminase activity"/>
    <property type="evidence" value="ECO:0007669"/>
    <property type="project" value="RHEA"/>
</dbReference>
<dbReference type="GO" id="GO:0042802">
    <property type="term" value="F:identical protein binding"/>
    <property type="evidence" value="ECO:0007669"/>
    <property type="project" value="TreeGrafter"/>
</dbReference>
<dbReference type="GO" id="GO:0046872">
    <property type="term" value="F:metal ion binding"/>
    <property type="evidence" value="ECO:0007669"/>
    <property type="project" value="UniProtKB-KW"/>
</dbReference>
<dbReference type="GO" id="GO:0044210">
    <property type="term" value="P:'de novo' CTP biosynthetic process"/>
    <property type="evidence" value="ECO:0007669"/>
    <property type="project" value="UniProtKB-UniRule"/>
</dbReference>
<dbReference type="GO" id="GO:0019856">
    <property type="term" value="P:pyrimidine nucleobase biosynthetic process"/>
    <property type="evidence" value="ECO:0007669"/>
    <property type="project" value="TreeGrafter"/>
</dbReference>
<dbReference type="CDD" id="cd03113">
    <property type="entry name" value="CTPS_N"/>
    <property type="match status" value="1"/>
</dbReference>
<dbReference type="CDD" id="cd01746">
    <property type="entry name" value="GATase1_CTP_Synthase"/>
    <property type="match status" value="1"/>
</dbReference>
<dbReference type="FunFam" id="3.40.50.300:FF:000009">
    <property type="entry name" value="CTP synthase"/>
    <property type="match status" value="1"/>
</dbReference>
<dbReference type="FunFam" id="3.40.50.880:FF:000002">
    <property type="entry name" value="CTP synthase"/>
    <property type="match status" value="1"/>
</dbReference>
<dbReference type="Gene3D" id="3.40.50.880">
    <property type="match status" value="1"/>
</dbReference>
<dbReference type="Gene3D" id="3.40.50.300">
    <property type="entry name" value="P-loop containing nucleotide triphosphate hydrolases"/>
    <property type="match status" value="1"/>
</dbReference>
<dbReference type="HAMAP" id="MF_01227">
    <property type="entry name" value="PyrG"/>
    <property type="match status" value="1"/>
</dbReference>
<dbReference type="InterPro" id="IPR029062">
    <property type="entry name" value="Class_I_gatase-like"/>
</dbReference>
<dbReference type="InterPro" id="IPR004468">
    <property type="entry name" value="CTP_synthase"/>
</dbReference>
<dbReference type="InterPro" id="IPR017456">
    <property type="entry name" value="CTP_synthase_N"/>
</dbReference>
<dbReference type="InterPro" id="IPR017926">
    <property type="entry name" value="GATASE"/>
</dbReference>
<dbReference type="InterPro" id="IPR033828">
    <property type="entry name" value="GATase1_CTP_Synthase"/>
</dbReference>
<dbReference type="InterPro" id="IPR027417">
    <property type="entry name" value="P-loop_NTPase"/>
</dbReference>
<dbReference type="NCBIfam" id="NF003792">
    <property type="entry name" value="PRK05380.1"/>
    <property type="match status" value="1"/>
</dbReference>
<dbReference type="NCBIfam" id="TIGR00337">
    <property type="entry name" value="PyrG"/>
    <property type="match status" value="1"/>
</dbReference>
<dbReference type="PANTHER" id="PTHR11550">
    <property type="entry name" value="CTP SYNTHASE"/>
    <property type="match status" value="1"/>
</dbReference>
<dbReference type="PANTHER" id="PTHR11550:SF0">
    <property type="entry name" value="CTP SYNTHASE-RELATED"/>
    <property type="match status" value="1"/>
</dbReference>
<dbReference type="Pfam" id="PF06418">
    <property type="entry name" value="CTP_synth_N"/>
    <property type="match status" value="1"/>
</dbReference>
<dbReference type="Pfam" id="PF00117">
    <property type="entry name" value="GATase"/>
    <property type="match status" value="1"/>
</dbReference>
<dbReference type="SUPFAM" id="SSF52317">
    <property type="entry name" value="Class I glutamine amidotransferase-like"/>
    <property type="match status" value="1"/>
</dbReference>
<dbReference type="SUPFAM" id="SSF52540">
    <property type="entry name" value="P-loop containing nucleoside triphosphate hydrolases"/>
    <property type="match status" value="1"/>
</dbReference>
<dbReference type="PROSITE" id="PS51273">
    <property type="entry name" value="GATASE_TYPE_1"/>
    <property type="match status" value="1"/>
</dbReference>
<accession>B7J6R2</accession>